<feature type="chain" id="PRO_0000304782" description="Zinc finger protein PLAGL1">
    <location>
        <begin position="1"/>
        <end position="463"/>
    </location>
</feature>
<feature type="zinc finger region" description="C2H2-type 1" evidence="2">
    <location>
        <begin position="4"/>
        <end position="26"/>
    </location>
</feature>
<feature type="zinc finger region" description="C2H2-type 2" evidence="2">
    <location>
        <begin position="32"/>
        <end position="56"/>
    </location>
</feature>
<feature type="zinc finger region" description="C2H2-type 3" evidence="2">
    <location>
        <begin position="62"/>
        <end position="84"/>
    </location>
</feature>
<feature type="zinc finger region" description="C2H2-type 4" evidence="2">
    <location>
        <begin position="91"/>
        <end position="113"/>
    </location>
</feature>
<feature type="zinc finger region" description="C2H2-type 5" evidence="2">
    <location>
        <begin position="120"/>
        <end position="142"/>
    </location>
</feature>
<feature type="zinc finger region" description="C2H2-type 6" evidence="2">
    <location>
        <begin position="156"/>
        <end position="178"/>
    </location>
</feature>
<feature type="zinc finger region" description="C2H2-type 7" evidence="2">
    <location>
        <begin position="184"/>
        <end position="207"/>
    </location>
</feature>
<feature type="region of interest" description="Disordered" evidence="3">
    <location>
        <begin position="285"/>
        <end position="310"/>
    </location>
</feature>
<feature type="compositionally biased region" description="Pro residues" evidence="3">
    <location>
        <begin position="287"/>
        <end position="297"/>
    </location>
</feature>
<feature type="compositionally biased region" description="Polar residues" evidence="3">
    <location>
        <begin position="298"/>
        <end position="310"/>
    </location>
</feature>
<comment type="function">
    <text evidence="1">Acts as a transcriptional activator. Involved in the transcriptional regulation of type 1 receptor for pituitary adenylate cyclase-activating polypeptide.</text>
</comment>
<comment type="subunit">
    <text evidence="1">Interacts with THRSP.</text>
</comment>
<comment type="subcellular location">
    <subcellularLocation>
        <location evidence="1">Nucleus</location>
    </subcellularLocation>
</comment>
<comment type="similarity">
    <text evidence="4">Belongs to the krueppel C2H2-type zinc-finger protein family.</text>
</comment>
<dbReference type="EMBL" id="DQ288899">
    <property type="protein sequence ID" value="ABB90556.1"/>
    <property type="molecule type" value="mRNA"/>
</dbReference>
<dbReference type="RefSeq" id="NP_001038010.1">
    <property type="nucleotide sequence ID" value="NM_001044545.1"/>
</dbReference>
<dbReference type="RefSeq" id="XP_005654425.1">
    <property type="nucleotide sequence ID" value="XM_005654368.3"/>
</dbReference>
<dbReference type="RefSeq" id="XP_005654426.1">
    <property type="nucleotide sequence ID" value="XM_005654369.2"/>
</dbReference>
<dbReference type="RefSeq" id="XP_005654427.1">
    <property type="nucleotide sequence ID" value="XM_005654370.2"/>
</dbReference>
<dbReference type="RefSeq" id="XP_005654428.1">
    <property type="nucleotide sequence ID" value="XM_005654371.3"/>
</dbReference>
<dbReference type="RefSeq" id="XP_005654429.1">
    <property type="nucleotide sequence ID" value="XM_005654372.2"/>
</dbReference>
<dbReference type="RefSeq" id="XP_005654430.1">
    <property type="nucleotide sequence ID" value="XM_005654373.2"/>
</dbReference>
<dbReference type="RefSeq" id="XP_013840210.1">
    <property type="nucleotide sequence ID" value="XM_013984756.1"/>
</dbReference>
<dbReference type="RefSeq" id="XP_013840213.1">
    <property type="nucleotide sequence ID" value="XM_013984759.2"/>
</dbReference>
<dbReference type="RefSeq" id="XP_013840216.1">
    <property type="nucleotide sequence ID" value="XM_013984762.2"/>
</dbReference>
<dbReference type="RefSeq" id="XP_013840218.1">
    <property type="nucleotide sequence ID" value="XM_013984764.2"/>
</dbReference>
<dbReference type="RefSeq" id="XP_013840221.1">
    <property type="nucleotide sequence ID" value="XM_013984767.2"/>
</dbReference>
<dbReference type="RefSeq" id="XP_013840226.1">
    <property type="nucleotide sequence ID" value="XM_013984772.1"/>
</dbReference>
<dbReference type="RefSeq" id="XP_020939698.1">
    <property type="nucleotide sequence ID" value="XM_021084039.1"/>
</dbReference>
<dbReference type="RefSeq" id="XP_020939704.1">
    <property type="nucleotide sequence ID" value="XM_021084045.1"/>
</dbReference>
<dbReference type="RefSeq" id="XP_020939712.1">
    <property type="nucleotide sequence ID" value="XM_021084053.1"/>
</dbReference>
<dbReference type="RefSeq" id="XP_020939718.1">
    <property type="nucleotide sequence ID" value="XM_021084059.1"/>
</dbReference>
<dbReference type="RefSeq" id="XP_020939723.1">
    <property type="nucleotide sequence ID" value="XM_021084064.1"/>
</dbReference>
<dbReference type="RefSeq" id="XP_020939726.1">
    <property type="nucleotide sequence ID" value="XM_021084067.1"/>
</dbReference>
<dbReference type="RefSeq" id="XP_020939739.1">
    <property type="nucleotide sequence ID" value="XM_021084080.1"/>
</dbReference>
<dbReference type="RefSeq" id="XP_020939746.1">
    <property type="nucleotide sequence ID" value="XM_021084087.1"/>
</dbReference>
<dbReference type="RefSeq" id="XP_020939751.1">
    <property type="nucleotide sequence ID" value="XM_021084092.1"/>
</dbReference>
<dbReference type="RefSeq" id="XP_020939758.1">
    <property type="nucleotide sequence ID" value="XM_021084099.1"/>
</dbReference>
<dbReference type="RefSeq" id="XP_020939765.1">
    <property type="nucleotide sequence ID" value="XM_021084106.1"/>
</dbReference>
<dbReference type="RefSeq" id="XP_020939773.1">
    <property type="nucleotide sequence ID" value="XM_021084114.1"/>
</dbReference>
<dbReference type="RefSeq" id="XP_020939780.1">
    <property type="nucleotide sequence ID" value="XM_021084121.1"/>
</dbReference>
<dbReference type="RefSeq" id="XP_020939787.1">
    <property type="nucleotide sequence ID" value="XM_021084128.1"/>
</dbReference>
<dbReference type="RefSeq" id="XP_020939815.1">
    <property type="nucleotide sequence ID" value="XM_021084156.1"/>
</dbReference>
<dbReference type="RefSeq" id="XP_020939822.1">
    <property type="nucleotide sequence ID" value="XM_021084163.1"/>
</dbReference>
<dbReference type="RefSeq" id="XP_020939830.1">
    <property type="nucleotide sequence ID" value="XM_021084171.1"/>
</dbReference>
<dbReference type="RefSeq" id="XP_020939835.1">
    <property type="nucleotide sequence ID" value="XM_021084176.1"/>
</dbReference>
<dbReference type="RefSeq" id="XP_020939841.1">
    <property type="nucleotide sequence ID" value="XM_021084182.1"/>
</dbReference>
<dbReference type="SMR" id="Q2I689"/>
<dbReference type="FunCoup" id="Q2I689">
    <property type="interactions" value="118"/>
</dbReference>
<dbReference type="STRING" id="9823.ENSSSCP00000035313"/>
<dbReference type="PaxDb" id="9823-ENSSSCP00000004459"/>
<dbReference type="Ensembl" id="ENSSSCT00000058859.3">
    <property type="protein sequence ID" value="ENSSSCP00000035313.1"/>
    <property type="gene ID" value="ENSSSCG00000004127.4"/>
</dbReference>
<dbReference type="Ensembl" id="ENSSSCT00015070041.1">
    <property type="protein sequence ID" value="ENSSSCP00015028002.1"/>
    <property type="gene ID" value="ENSSSCG00015052051.1"/>
</dbReference>
<dbReference type="Ensembl" id="ENSSSCT00025071306.1">
    <property type="protein sequence ID" value="ENSSSCP00025030868.1"/>
    <property type="gene ID" value="ENSSSCG00025051938.1"/>
</dbReference>
<dbReference type="Ensembl" id="ENSSSCT00030026092.1">
    <property type="protein sequence ID" value="ENSSSCP00030011662.1"/>
    <property type="gene ID" value="ENSSSCG00030018879.1"/>
</dbReference>
<dbReference type="Ensembl" id="ENSSSCT00035005258.1">
    <property type="protein sequence ID" value="ENSSSCP00035001821.1"/>
    <property type="gene ID" value="ENSSSCG00035004204.1"/>
</dbReference>
<dbReference type="Ensembl" id="ENSSSCT00040012589.1">
    <property type="protein sequence ID" value="ENSSSCP00040004733.1"/>
    <property type="gene ID" value="ENSSSCG00040009689.1"/>
</dbReference>
<dbReference type="Ensembl" id="ENSSSCT00045027447.1">
    <property type="protein sequence ID" value="ENSSSCP00045018963.1"/>
    <property type="gene ID" value="ENSSSCG00045016133.1"/>
</dbReference>
<dbReference type="Ensembl" id="ENSSSCT00050048942.1">
    <property type="protein sequence ID" value="ENSSSCP00050020404.1"/>
    <property type="gene ID" value="ENSSSCG00050036388.1"/>
</dbReference>
<dbReference type="Ensembl" id="ENSSSCT00055049793.1">
    <property type="protein sequence ID" value="ENSSSCP00055039787.1"/>
    <property type="gene ID" value="ENSSSCG00055025175.1"/>
</dbReference>
<dbReference type="Ensembl" id="ENSSSCT00060095523.1">
    <property type="protein sequence ID" value="ENSSSCP00060041319.1"/>
    <property type="gene ID" value="ENSSSCG00060069862.1"/>
</dbReference>
<dbReference type="Ensembl" id="ENSSSCT00065100194.1">
    <property type="protein sequence ID" value="ENSSSCP00065044023.1"/>
    <property type="gene ID" value="ENSSSCG00065072872.1"/>
</dbReference>
<dbReference type="Ensembl" id="ENSSSCT00065100279.1">
    <property type="protein sequence ID" value="ENSSSCP00065044071.1"/>
    <property type="gene ID" value="ENSSSCG00065072872.1"/>
</dbReference>
<dbReference type="Ensembl" id="ENSSSCT00065100294.1">
    <property type="protein sequence ID" value="ENSSSCP00065044077.1"/>
    <property type="gene ID" value="ENSSSCG00065072872.1"/>
</dbReference>
<dbReference type="Ensembl" id="ENSSSCT00065100299.1">
    <property type="protein sequence ID" value="ENSSSCP00065044082.1"/>
    <property type="gene ID" value="ENSSSCG00065072872.1"/>
</dbReference>
<dbReference type="Ensembl" id="ENSSSCT00065100310.1">
    <property type="protein sequence ID" value="ENSSSCP00065044091.1"/>
    <property type="gene ID" value="ENSSSCG00065072872.1"/>
</dbReference>
<dbReference type="Ensembl" id="ENSSSCT00065100322.1">
    <property type="protein sequence ID" value="ENSSSCP00065044097.1"/>
    <property type="gene ID" value="ENSSSCG00065072872.1"/>
</dbReference>
<dbReference type="Ensembl" id="ENSSSCT00065100343.1">
    <property type="protein sequence ID" value="ENSSSCP00065044109.1"/>
    <property type="gene ID" value="ENSSSCG00065072872.1"/>
</dbReference>
<dbReference type="Ensembl" id="ENSSSCT00065100359.1">
    <property type="protein sequence ID" value="ENSSSCP00065044115.1"/>
    <property type="gene ID" value="ENSSSCG00065072872.1"/>
</dbReference>
<dbReference type="Ensembl" id="ENSSSCT00065100380.1">
    <property type="protein sequence ID" value="ENSSSCP00065044126.1"/>
    <property type="gene ID" value="ENSSSCG00065072872.1"/>
</dbReference>
<dbReference type="Ensembl" id="ENSSSCT00105062933">
    <property type="protein sequence ID" value="ENSSSCP00105044734"/>
    <property type="gene ID" value="ENSSSCG00105033083"/>
</dbReference>
<dbReference type="Ensembl" id="ENSSSCT00110004803">
    <property type="protein sequence ID" value="ENSSSCP00110003592"/>
    <property type="gene ID" value="ENSSSCG00110002393"/>
</dbReference>
<dbReference type="Ensembl" id="ENSSSCT00115002483">
    <property type="protein sequence ID" value="ENSSSCP00115002306"/>
    <property type="gene ID" value="ENSSSCG00115001477"/>
</dbReference>
<dbReference type="Ensembl" id="ENSSSCT00130056682">
    <property type="protein sequence ID" value="ENSSSCP00130040596"/>
    <property type="gene ID" value="ENSSSCG00130029062"/>
</dbReference>
<dbReference type="GeneID" id="733596"/>
<dbReference type="KEGG" id="ssc:733596"/>
<dbReference type="CTD" id="5325"/>
<dbReference type="VGNC" id="VGNC:91510">
    <property type="gene designation" value="PLAGL1"/>
</dbReference>
<dbReference type="eggNOG" id="KOG1721">
    <property type="taxonomic scope" value="Eukaryota"/>
</dbReference>
<dbReference type="GeneTree" id="ENSGT00940000162004"/>
<dbReference type="HOGENOM" id="CLU_002678_66_1_1"/>
<dbReference type="InParanoid" id="Q2I689"/>
<dbReference type="OMA" id="NKMAYGC"/>
<dbReference type="OrthoDB" id="8117402at2759"/>
<dbReference type="TreeFam" id="TF332024"/>
<dbReference type="Proteomes" id="UP000008227">
    <property type="component" value="Chromosome 1"/>
</dbReference>
<dbReference type="Proteomes" id="UP000314985">
    <property type="component" value="Unplaced"/>
</dbReference>
<dbReference type="Proteomes" id="UP000694570">
    <property type="component" value="Unplaced"/>
</dbReference>
<dbReference type="Proteomes" id="UP000694571">
    <property type="component" value="Unplaced"/>
</dbReference>
<dbReference type="Proteomes" id="UP000694720">
    <property type="component" value="Unplaced"/>
</dbReference>
<dbReference type="Proteomes" id="UP000694722">
    <property type="component" value="Unplaced"/>
</dbReference>
<dbReference type="Proteomes" id="UP000694723">
    <property type="component" value="Unplaced"/>
</dbReference>
<dbReference type="Proteomes" id="UP000694724">
    <property type="component" value="Unplaced"/>
</dbReference>
<dbReference type="Proteomes" id="UP000694725">
    <property type="component" value="Unplaced"/>
</dbReference>
<dbReference type="Proteomes" id="UP000694726">
    <property type="component" value="Unplaced"/>
</dbReference>
<dbReference type="Proteomes" id="UP000694727">
    <property type="component" value="Unplaced"/>
</dbReference>
<dbReference type="Proteomes" id="UP000694728">
    <property type="component" value="Unplaced"/>
</dbReference>
<dbReference type="Bgee" id="ENSSSCG00000004127">
    <property type="expression patterns" value="Expressed in pituitary gland and 40 other cell types or tissues"/>
</dbReference>
<dbReference type="ExpressionAtlas" id="Q2I689">
    <property type="expression patterns" value="baseline and differential"/>
</dbReference>
<dbReference type="GO" id="GO:0005794">
    <property type="term" value="C:Golgi apparatus"/>
    <property type="evidence" value="ECO:0007669"/>
    <property type="project" value="Ensembl"/>
</dbReference>
<dbReference type="GO" id="GO:0016604">
    <property type="term" value="C:nuclear body"/>
    <property type="evidence" value="ECO:0007669"/>
    <property type="project" value="Ensembl"/>
</dbReference>
<dbReference type="GO" id="GO:0005654">
    <property type="term" value="C:nucleoplasm"/>
    <property type="evidence" value="ECO:0000318"/>
    <property type="project" value="GO_Central"/>
</dbReference>
<dbReference type="GO" id="GO:0001228">
    <property type="term" value="F:DNA-binding transcription activator activity, RNA polymerase II-specific"/>
    <property type="evidence" value="ECO:0000318"/>
    <property type="project" value="GO_Central"/>
</dbReference>
<dbReference type="GO" id="GO:0001227">
    <property type="term" value="F:DNA-binding transcription repressor activity, RNA polymerase II-specific"/>
    <property type="evidence" value="ECO:0000318"/>
    <property type="project" value="GO_Central"/>
</dbReference>
<dbReference type="GO" id="GO:0000978">
    <property type="term" value="F:RNA polymerase II cis-regulatory region sequence-specific DNA binding"/>
    <property type="evidence" value="ECO:0000318"/>
    <property type="project" value="GO_Central"/>
</dbReference>
<dbReference type="GO" id="GO:0008270">
    <property type="term" value="F:zinc ion binding"/>
    <property type="evidence" value="ECO:0007669"/>
    <property type="project" value="UniProtKB-KW"/>
</dbReference>
<dbReference type="GO" id="GO:0000122">
    <property type="term" value="P:negative regulation of transcription by RNA polymerase II"/>
    <property type="evidence" value="ECO:0000318"/>
    <property type="project" value="GO_Central"/>
</dbReference>
<dbReference type="GO" id="GO:0001817">
    <property type="term" value="P:regulation of cytokine production"/>
    <property type="evidence" value="ECO:0000318"/>
    <property type="project" value="GO_Central"/>
</dbReference>
<dbReference type="GO" id="GO:0002682">
    <property type="term" value="P:regulation of immune system process"/>
    <property type="evidence" value="ECO:0000318"/>
    <property type="project" value="GO_Central"/>
</dbReference>
<dbReference type="FunFam" id="3.30.160.60:FF:000425">
    <property type="entry name" value="PLAG1 like zinc finger 1"/>
    <property type="match status" value="1"/>
</dbReference>
<dbReference type="FunFam" id="3.30.160.60:FF:000482">
    <property type="entry name" value="PLAG1 like zinc finger 1"/>
    <property type="match status" value="1"/>
</dbReference>
<dbReference type="FunFam" id="3.30.160.60:FF:000231">
    <property type="entry name" value="PLAG1 like zinc finger 2"/>
    <property type="match status" value="1"/>
</dbReference>
<dbReference type="FunFam" id="3.30.160.60:FF:000256">
    <property type="entry name" value="PLAG1 like zinc finger 2"/>
    <property type="match status" value="1"/>
</dbReference>
<dbReference type="FunFam" id="3.30.160.60:FF:000600">
    <property type="entry name" value="PLAG1 like zinc finger 2"/>
    <property type="match status" value="1"/>
</dbReference>
<dbReference type="Gene3D" id="3.30.160.60">
    <property type="entry name" value="Classic Zinc Finger"/>
    <property type="match status" value="6"/>
</dbReference>
<dbReference type="InterPro" id="IPR036236">
    <property type="entry name" value="Znf_C2H2_sf"/>
</dbReference>
<dbReference type="InterPro" id="IPR013087">
    <property type="entry name" value="Znf_C2H2_type"/>
</dbReference>
<dbReference type="PANTHER" id="PTHR24399">
    <property type="entry name" value="ZINC FINGER AND BTB DOMAIN-CONTAINING"/>
    <property type="match status" value="1"/>
</dbReference>
<dbReference type="PANTHER" id="PTHR24399:SF31">
    <property type="entry name" value="ZINC FINGER PROTEIN PLAGL1"/>
    <property type="match status" value="1"/>
</dbReference>
<dbReference type="Pfam" id="PF00096">
    <property type="entry name" value="zf-C2H2"/>
    <property type="match status" value="2"/>
</dbReference>
<dbReference type="SMART" id="SM00355">
    <property type="entry name" value="ZnF_C2H2"/>
    <property type="match status" value="7"/>
</dbReference>
<dbReference type="SUPFAM" id="SSF57667">
    <property type="entry name" value="beta-beta-alpha zinc fingers"/>
    <property type="match status" value="3"/>
</dbReference>
<dbReference type="PROSITE" id="PS00028">
    <property type="entry name" value="ZINC_FINGER_C2H2_1"/>
    <property type="match status" value="7"/>
</dbReference>
<dbReference type="PROSITE" id="PS50157">
    <property type="entry name" value="ZINC_FINGER_C2H2_2"/>
    <property type="match status" value="7"/>
</dbReference>
<protein>
    <recommendedName>
        <fullName>Zinc finger protein PLAGL1</fullName>
    </recommendedName>
    <alternativeName>
        <fullName>Pleiomorphic adenoma-like protein 1</fullName>
    </alternativeName>
</protein>
<sequence length="463" mass="51058">MATYPCQLCGKTFLTLEKFTIHNYSHSRERPYKCLQPDCGKAFISRYKLMRHMATHSPQKSHQCAHCEKTFNRKDHLKNHLQTHDPNKMAFGCEECGKKYNTMLGYKRHLALHAASSGDLTCGVCALELGSTEVLLDHLKAHAEEKPPSGTKEKKHQCDHCERCFYTRKDVRRHLVVHTGCKDFLCQFCAQRFGRKDHLTRHTKKTHSQELMKESLQSGDLLSTFHSISPQFQLKAAPLSPFPLGAPAQNGLASSLPAEVHSHTHNPSEQTSQPVQALPELLAPLHPVAPPTSPPQPLQNHKYNTSSTSYSPLASLPLKADTKGFCNTNLLEDLPLQEPQSPHKLNPGFDLAKGGAGKVNLPKELPADAVNLTIPASLDLSPLLGFWQLPPPATQNAFGNSTLTLGPGESLPHRLSCLGQQQQDPSLAMSTMSLGQLPLPPIPHVFPAGTGSAILPHFHHAFR</sequence>
<keyword id="KW-0010">Activator</keyword>
<keyword id="KW-0238">DNA-binding</keyword>
<keyword id="KW-0479">Metal-binding</keyword>
<keyword id="KW-0539">Nucleus</keyword>
<keyword id="KW-1185">Reference proteome</keyword>
<keyword id="KW-0677">Repeat</keyword>
<keyword id="KW-0804">Transcription</keyword>
<keyword id="KW-0805">Transcription regulation</keyword>
<keyword id="KW-0862">Zinc</keyword>
<keyword id="KW-0863">Zinc-finger</keyword>
<name>PLAL1_PIG</name>
<organism>
    <name type="scientific">Sus scrofa</name>
    <name type="common">Pig</name>
    <dbReference type="NCBI Taxonomy" id="9823"/>
    <lineage>
        <taxon>Eukaryota</taxon>
        <taxon>Metazoa</taxon>
        <taxon>Chordata</taxon>
        <taxon>Craniata</taxon>
        <taxon>Vertebrata</taxon>
        <taxon>Euteleostomi</taxon>
        <taxon>Mammalia</taxon>
        <taxon>Eutheria</taxon>
        <taxon>Laurasiatheria</taxon>
        <taxon>Artiodactyla</taxon>
        <taxon>Suina</taxon>
        <taxon>Suidae</taxon>
        <taxon>Sus</taxon>
    </lineage>
</organism>
<reference key="1">
    <citation type="journal article" date="2007" name="J. Anim. Sci.">
        <title>Imprinted status of pleomorphic adenoma gene-like I and paternal expression gene 10 genes in pigs.</title>
        <authorList>
            <person name="Zhang F.W."/>
            <person name="Cheng H.C."/>
            <person name="Jiang C.D."/>
            <person name="Deng C.Y."/>
            <person name="Xiong Y.Z."/>
            <person name="Li F.E."/>
            <person name="Lei M.G."/>
        </authorList>
    </citation>
    <scope>NUCLEOTIDE SEQUENCE [MRNA]</scope>
</reference>
<gene>
    <name type="primary">PLAGL1</name>
</gene>
<accession>Q2I689</accession>
<evidence type="ECO:0000250" key="1">
    <source>
        <dbReference type="UniProtKB" id="Q9UM63"/>
    </source>
</evidence>
<evidence type="ECO:0000255" key="2">
    <source>
        <dbReference type="PROSITE-ProRule" id="PRU00042"/>
    </source>
</evidence>
<evidence type="ECO:0000256" key="3">
    <source>
        <dbReference type="SAM" id="MobiDB-lite"/>
    </source>
</evidence>
<evidence type="ECO:0000305" key="4"/>
<proteinExistence type="evidence at transcript level"/>